<organism>
    <name type="scientific">Vaccinia virus (strain Western Reserve)</name>
    <name type="common">VACV</name>
    <name type="synonym">Vaccinia virus (strain WR)</name>
    <dbReference type="NCBI Taxonomy" id="10254"/>
    <lineage>
        <taxon>Viruses</taxon>
        <taxon>Varidnaviria</taxon>
        <taxon>Bamfordvirae</taxon>
        <taxon>Nucleocytoviricota</taxon>
        <taxon>Pokkesviricetes</taxon>
        <taxon>Chitovirales</taxon>
        <taxon>Poxviridae</taxon>
        <taxon>Chordopoxvirinae</taxon>
        <taxon>Orthopoxvirus</taxon>
        <taxon>Vaccinia virus</taxon>
    </lineage>
</organism>
<sequence>MFMYPEFARKALSKLISKKLNIEKVSSKHQLVLLDYGLHGLLPKSLYLEAINSDILNVRFFPPEIINVTDIVKALQNSCRVDEYLKSVSLYHKNSLMVSGPNVVKLMIEYNLLTHSDLEWLINENVVKATYLLKINAYMINFKIDLTVDEIIDLVKDIPVGATLHLYNILNNIDLDIVLRISDEYNIPPVHDILSKLTDEEMCIKLVTKYPMDNVINFINQDVRYSPTFIKTIKDFVNEHLPTMYDGLNDYLHSVIIDEDLIEEYKIKSVAMFNLEYKTDVNTLTLDEQIFVEVNISYYDFRYRQFADEFRDYIMIKERRQITMQSGDRIRRFRRPMSLRSTIIKKDTDSLEDILAHIDNARKNSKVSIEDVERIISSFRLNPCVVRRTMLSDIDIKTKIMVLKIVKDWKSCALTLSAIKGIMVTDTINTVLSKILHHHRNVFKYLTSVENKEIAVCNCSRCLSLFYRELKSVRCDLHTDDGLLDRLYDLTRYALHGKINQNLIGQRCWGPLTEMLFNENKKKKLNNLMEYIKISDMLVYGHSIEKTLIPITDSLSFKLSVDTMSVLNDQYAKVVIFFNTIIEYIIATIYYRLTVLNNYTNVKHFVSKVLHTVMEACGVLFSYIKVNDKIEHELEEMVDKGTVPSYLYHLSINVISIILDDINGTR</sequence>
<name>PG074_VACCW</name>
<organismHost>
    <name type="scientific">Bos taurus</name>
    <name type="common">Bovine</name>
    <dbReference type="NCBI Taxonomy" id="9913"/>
</organismHost>
<evidence type="ECO:0000255" key="1"/>
<evidence type="ECO:0000269" key="2">
    <source>
    </source>
</evidence>
<evidence type="ECO:0000305" key="3"/>
<protein>
    <recommendedName>
        <fullName>Protein OPG074</fullName>
    </recommendedName>
    <alternativeName>
        <fullName>Protein O1</fullName>
    </alternativeName>
</protein>
<accession>Q80HX1</accession>
<reference key="1">
    <citation type="submission" date="2003-02" db="EMBL/GenBank/DDBJ databases">
        <title>Sequencing of the coding region of Vaccinia-WR to an average 9-fold redundancy and an error rate of 0.16/10kb.</title>
        <authorList>
            <person name="Esposito J.J."/>
            <person name="Frace A.M."/>
            <person name="Sammons S.A."/>
            <person name="Olsen-Rasmussen M."/>
            <person name="Osborne J."/>
            <person name="Wohlhueter R."/>
        </authorList>
    </citation>
    <scope>NUCLEOTIDE SEQUENCE [LARGE SCALE GENOMIC DNA]</scope>
</reference>
<reference key="2">
    <citation type="journal article" date="2015" name="J. Virol.">
        <title>Deciphering poxvirus gene expression by RNA sequencing and ribosome profiling.</title>
        <authorList>
            <person name="Yang Z."/>
            <person name="Cao S."/>
            <person name="Martens C.A."/>
            <person name="Porcella S.F."/>
            <person name="Xie Z."/>
            <person name="Ma M."/>
            <person name="Shen B."/>
            <person name="Moss B."/>
        </authorList>
    </citation>
    <scope>INDUCTION</scope>
</reference>
<proteinExistence type="evidence at transcript level"/>
<feature type="chain" id="PRO_0000099639" description="Protein OPG074">
    <location>
        <begin position="1"/>
        <end position="666"/>
    </location>
</feature>
<feature type="transmembrane region" description="Helical" evidence="1">
    <location>
        <begin position="574"/>
        <end position="596"/>
    </location>
</feature>
<keyword id="KW-0244">Early protein</keyword>
<keyword id="KW-0472">Membrane</keyword>
<keyword id="KW-1185">Reference proteome</keyword>
<keyword id="KW-0812">Transmembrane</keyword>
<keyword id="KW-1133">Transmembrane helix</keyword>
<comment type="subcellular location">
    <subcellularLocation>
        <location evidence="3">Membrane</location>
        <topology evidence="3">Single-pass membrane protein</topology>
    </subcellularLocation>
</comment>
<comment type="induction">
    <text evidence="2">Expressed in the early phase of the viral replicative cycle.</text>
</comment>
<comment type="similarity">
    <text evidence="3">Belongs to the orthopoxvirus OPG074 family.</text>
</comment>
<gene>
    <name type="primary">OPG074</name>
    <name type="ordered locus">VACWR068</name>
    <name type="ORF">O1L</name>
</gene>
<dbReference type="EMBL" id="AY243312">
    <property type="protein sequence ID" value="AAO89347.1"/>
    <property type="molecule type" value="Genomic_DNA"/>
</dbReference>
<dbReference type="RefSeq" id="YP_232950.1">
    <property type="nucleotide sequence ID" value="NC_006998.1"/>
</dbReference>
<dbReference type="DNASU" id="3707601"/>
<dbReference type="GeneID" id="3707601"/>
<dbReference type="KEGG" id="vg:3707601"/>
<dbReference type="Proteomes" id="UP000000344">
    <property type="component" value="Genome"/>
</dbReference>
<dbReference type="GO" id="GO:0016020">
    <property type="term" value="C:membrane"/>
    <property type="evidence" value="ECO:0007669"/>
    <property type="project" value="UniProtKB-SubCell"/>
</dbReference>
<dbReference type="InterPro" id="IPR021155">
    <property type="entry name" value="Poxvirus_E2/O1"/>
</dbReference>
<dbReference type="InterPro" id="IPR006732">
    <property type="entry name" value="Poxvirus_O1"/>
</dbReference>
<dbReference type="Pfam" id="PF04497">
    <property type="entry name" value="Pox_E2-like"/>
    <property type="match status" value="2"/>
</dbReference>
<dbReference type="PIRSF" id="PIRSF015980">
    <property type="entry name" value="VAC_O1L"/>
    <property type="match status" value="1"/>
</dbReference>